<name>SSRP_METNO</name>
<proteinExistence type="inferred from homology"/>
<sequence length="157" mass="18144">MARKPDPGRRIVADNRKARFNYEITDTVEAGIALTGTEVKSLRGGKATIGEAYAGPSGDEFFLFNAYIPEYLEANRFNHETKRPRRLLLHRRQINKFLGATQREGYTVIPLKIYFNERGRAKVELGLGRGKKLHDKRETAKERDWQRDRARLLRDKG</sequence>
<evidence type="ECO:0000255" key="1">
    <source>
        <dbReference type="HAMAP-Rule" id="MF_00023"/>
    </source>
</evidence>
<organism>
    <name type="scientific">Methylobacterium nodulans (strain LMG 21967 / CNCM I-2342 / ORS 2060)</name>
    <dbReference type="NCBI Taxonomy" id="460265"/>
    <lineage>
        <taxon>Bacteria</taxon>
        <taxon>Pseudomonadati</taxon>
        <taxon>Pseudomonadota</taxon>
        <taxon>Alphaproteobacteria</taxon>
        <taxon>Hyphomicrobiales</taxon>
        <taxon>Methylobacteriaceae</taxon>
        <taxon>Methylobacterium</taxon>
    </lineage>
</organism>
<feature type="chain" id="PRO_1000197614" description="SsrA-binding protein">
    <location>
        <begin position="1"/>
        <end position="157"/>
    </location>
</feature>
<comment type="function">
    <text evidence="1">Required for rescue of stalled ribosomes mediated by trans-translation. Binds to transfer-messenger RNA (tmRNA), required for stable association of tmRNA with ribosomes. tmRNA and SmpB together mimic tRNA shape, replacing the anticodon stem-loop with SmpB. tmRNA is encoded by the ssrA gene; the 2 termini fold to resemble tRNA(Ala) and it encodes a 'tag peptide', a short internal open reading frame. During trans-translation Ala-aminoacylated tmRNA acts like a tRNA, entering the A-site of stalled ribosomes, displacing the stalled mRNA. The ribosome then switches to translate the ORF on the tmRNA; the nascent peptide is terminated with the 'tag peptide' encoded by the tmRNA and targeted for degradation. The ribosome is freed to recommence translation, which seems to be the essential function of trans-translation.</text>
</comment>
<comment type="subcellular location">
    <subcellularLocation>
        <location evidence="1">Cytoplasm</location>
    </subcellularLocation>
    <text evidence="1">The tmRNA-SmpB complex associates with stalled 70S ribosomes.</text>
</comment>
<comment type="similarity">
    <text evidence="1">Belongs to the SmpB family.</text>
</comment>
<accession>B8INF1</accession>
<reference key="1">
    <citation type="submission" date="2009-01" db="EMBL/GenBank/DDBJ databases">
        <title>Complete sequence of chromosome of Methylobacterium nodulans ORS 2060.</title>
        <authorList>
            <consortium name="US DOE Joint Genome Institute"/>
            <person name="Lucas S."/>
            <person name="Copeland A."/>
            <person name="Lapidus A."/>
            <person name="Glavina del Rio T."/>
            <person name="Dalin E."/>
            <person name="Tice H."/>
            <person name="Bruce D."/>
            <person name="Goodwin L."/>
            <person name="Pitluck S."/>
            <person name="Sims D."/>
            <person name="Brettin T."/>
            <person name="Detter J.C."/>
            <person name="Han C."/>
            <person name="Larimer F."/>
            <person name="Land M."/>
            <person name="Hauser L."/>
            <person name="Kyrpides N."/>
            <person name="Ivanova N."/>
            <person name="Marx C.J."/>
            <person name="Richardson P."/>
        </authorList>
    </citation>
    <scope>NUCLEOTIDE SEQUENCE [LARGE SCALE GENOMIC DNA]</scope>
    <source>
        <strain>LMG 21967 / CNCM I-2342 / ORS 2060</strain>
    </source>
</reference>
<gene>
    <name evidence="1" type="primary">smpB</name>
    <name type="ordered locus">Mnod_1485</name>
</gene>
<keyword id="KW-0963">Cytoplasm</keyword>
<keyword id="KW-1185">Reference proteome</keyword>
<keyword id="KW-0694">RNA-binding</keyword>
<dbReference type="EMBL" id="CP001349">
    <property type="protein sequence ID" value="ACL56477.1"/>
    <property type="molecule type" value="Genomic_DNA"/>
</dbReference>
<dbReference type="RefSeq" id="WP_015928173.1">
    <property type="nucleotide sequence ID" value="NC_011894.1"/>
</dbReference>
<dbReference type="SMR" id="B8INF1"/>
<dbReference type="STRING" id="460265.Mnod_1485"/>
<dbReference type="KEGG" id="mno:Mnod_1485"/>
<dbReference type="eggNOG" id="COG0691">
    <property type="taxonomic scope" value="Bacteria"/>
</dbReference>
<dbReference type="HOGENOM" id="CLU_108953_0_1_5"/>
<dbReference type="OrthoDB" id="9805462at2"/>
<dbReference type="Proteomes" id="UP000008207">
    <property type="component" value="Chromosome"/>
</dbReference>
<dbReference type="GO" id="GO:0005829">
    <property type="term" value="C:cytosol"/>
    <property type="evidence" value="ECO:0007669"/>
    <property type="project" value="TreeGrafter"/>
</dbReference>
<dbReference type="GO" id="GO:0003723">
    <property type="term" value="F:RNA binding"/>
    <property type="evidence" value="ECO:0007669"/>
    <property type="project" value="UniProtKB-UniRule"/>
</dbReference>
<dbReference type="GO" id="GO:0070929">
    <property type="term" value="P:trans-translation"/>
    <property type="evidence" value="ECO:0007669"/>
    <property type="project" value="UniProtKB-UniRule"/>
</dbReference>
<dbReference type="CDD" id="cd09294">
    <property type="entry name" value="SmpB"/>
    <property type="match status" value="1"/>
</dbReference>
<dbReference type="Gene3D" id="2.40.280.10">
    <property type="match status" value="1"/>
</dbReference>
<dbReference type="HAMAP" id="MF_00023">
    <property type="entry name" value="SmpB"/>
    <property type="match status" value="1"/>
</dbReference>
<dbReference type="InterPro" id="IPR023620">
    <property type="entry name" value="SmpB"/>
</dbReference>
<dbReference type="InterPro" id="IPR000037">
    <property type="entry name" value="SsrA-bd_prot"/>
</dbReference>
<dbReference type="InterPro" id="IPR020081">
    <property type="entry name" value="SsrA-bd_prot_CS"/>
</dbReference>
<dbReference type="NCBIfam" id="NF003843">
    <property type="entry name" value="PRK05422.1"/>
    <property type="match status" value="1"/>
</dbReference>
<dbReference type="NCBIfam" id="TIGR00086">
    <property type="entry name" value="smpB"/>
    <property type="match status" value="1"/>
</dbReference>
<dbReference type="PANTHER" id="PTHR30308:SF2">
    <property type="entry name" value="SSRA-BINDING PROTEIN"/>
    <property type="match status" value="1"/>
</dbReference>
<dbReference type="PANTHER" id="PTHR30308">
    <property type="entry name" value="TMRNA-BINDING COMPONENT OF TRANS-TRANSLATION TAGGING COMPLEX"/>
    <property type="match status" value="1"/>
</dbReference>
<dbReference type="Pfam" id="PF01668">
    <property type="entry name" value="SmpB"/>
    <property type="match status" value="1"/>
</dbReference>
<dbReference type="SUPFAM" id="SSF74982">
    <property type="entry name" value="Small protein B (SmpB)"/>
    <property type="match status" value="1"/>
</dbReference>
<dbReference type="PROSITE" id="PS01317">
    <property type="entry name" value="SSRP"/>
    <property type="match status" value="1"/>
</dbReference>
<protein>
    <recommendedName>
        <fullName evidence="1">SsrA-binding protein</fullName>
    </recommendedName>
    <alternativeName>
        <fullName evidence="1">Small protein B</fullName>
    </alternativeName>
</protein>